<evidence type="ECO:0000255" key="1">
    <source>
        <dbReference type="HAMAP-Rule" id="MF_01328"/>
    </source>
</evidence>
<evidence type="ECO:0000256" key="2">
    <source>
        <dbReference type="SAM" id="MobiDB-lite"/>
    </source>
</evidence>
<evidence type="ECO:0000305" key="3"/>
<organism>
    <name type="scientific">Hydrogenovibrio crunogenus (strain DSM 25203 / XCL-2)</name>
    <name type="common">Thiomicrospira crunogena</name>
    <dbReference type="NCBI Taxonomy" id="317025"/>
    <lineage>
        <taxon>Bacteria</taxon>
        <taxon>Pseudomonadati</taxon>
        <taxon>Pseudomonadota</taxon>
        <taxon>Gammaproteobacteria</taxon>
        <taxon>Thiotrichales</taxon>
        <taxon>Piscirickettsiaceae</taxon>
        <taxon>Hydrogenovibrio</taxon>
    </lineage>
</organism>
<name>RL4_HYDCU</name>
<protein>
    <recommendedName>
        <fullName evidence="1">Large ribosomal subunit protein uL4</fullName>
    </recommendedName>
    <alternativeName>
        <fullName evidence="3">50S ribosomal protein L4</fullName>
    </alternativeName>
</protein>
<feature type="chain" id="PRO_0000242457" description="Large ribosomal subunit protein uL4">
    <location>
        <begin position="1"/>
        <end position="206"/>
    </location>
</feature>
<feature type="region of interest" description="Disordered" evidence="2">
    <location>
        <begin position="47"/>
        <end position="79"/>
    </location>
</feature>
<feature type="compositionally biased region" description="Low complexity" evidence="2">
    <location>
        <begin position="69"/>
        <end position="79"/>
    </location>
</feature>
<keyword id="KW-0687">Ribonucleoprotein</keyword>
<keyword id="KW-0689">Ribosomal protein</keyword>
<keyword id="KW-0694">RNA-binding</keyword>
<keyword id="KW-0699">rRNA-binding</keyword>
<dbReference type="EMBL" id="CP000109">
    <property type="protein sequence ID" value="ABB40892.1"/>
    <property type="molecule type" value="Genomic_DNA"/>
</dbReference>
<dbReference type="SMR" id="Q31IY1"/>
<dbReference type="STRING" id="317025.Tcr_0296"/>
<dbReference type="KEGG" id="tcx:Tcr_0296"/>
<dbReference type="eggNOG" id="COG0088">
    <property type="taxonomic scope" value="Bacteria"/>
</dbReference>
<dbReference type="HOGENOM" id="CLU_041575_5_2_6"/>
<dbReference type="OrthoDB" id="9803201at2"/>
<dbReference type="GO" id="GO:1990904">
    <property type="term" value="C:ribonucleoprotein complex"/>
    <property type="evidence" value="ECO:0007669"/>
    <property type="project" value="UniProtKB-KW"/>
</dbReference>
<dbReference type="GO" id="GO:0005840">
    <property type="term" value="C:ribosome"/>
    <property type="evidence" value="ECO:0007669"/>
    <property type="project" value="UniProtKB-KW"/>
</dbReference>
<dbReference type="GO" id="GO:0019843">
    <property type="term" value="F:rRNA binding"/>
    <property type="evidence" value="ECO:0007669"/>
    <property type="project" value="UniProtKB-UniRule"/>
</dbReference>
<dbReference type="GO" id="GO:0003735">
    <property type="term" value="F:structural constituent of ribosome"/>
    <property type="evidence" value="ECO:0007669"/>
    <property type="project" value="InterPro"/>
</dbReference>
<dbReference type="GO" id="GO:0006412">
    <property type="term" value="P:translation"/>
    <property type="evidence" value="ECO:0007669"/>
    <property type="project" value="UniProtKB-UniRule"/>
</dbReference>
<dbReference type="Gene3D" id="3.40.1370.10">
    <property type="match status" value="1"/>
</dbReference>
<dbReference type="HAMAP" id="MF_01328_B">
    <property type="entry name" value="Ribosomal_uL4_B"/>
    <property type="match status" value="1"/>
</dbReference>
<dbReference type="InterPro" id="IPR002136">
    <property type="entry name" value="Ribosomal_uL4"/>
</dbReference>
<dbReference type="InterPro" id="IPR013005">
    <property type="entry name" value="Ribosomal_uL4-like"/>
</dbReference>
<dbReference type="InterPro" id="IPR023574">
    <property type="entry name" value="Ribosomal_uL4_dom_sf"/>
</dbReference>
<dbReference type="NCBIfam" id="TIGR03953">
    <property type="entry name" value="rplD_bact"/>
    <property type="match status" value="1"/>
</dbReference>
<dbReference type="PANTHER" id="PTHR10746">
    <property type="entry name" value="50S RIBOSOMAL PROTEIN L4"/>
    <property type="match status" value="1"/>
</dbReference>
<dbReference type="PANTHER" id="PTHR10746:SF6">
    <property type="entry name" value="LARGE RIBOSOMAL SUBUNIT PROTEIN UL4M"/>
    <property type="match status" value="1"/>
</dbReference>
<dbReference type="Pfam" id="PF00573">
    <property type="entry name" value="Ribosomal_L4"/>
    <property type="match status" value="1"/>
</dbReference>
<dbReference type="SUPFAM" id="SSF52166">
    <property type="entry name" value="Ribosomal protein L4"/>
    <property type="match status" value="1"/>
</dbReference>
<proteinExistence type="inferred from homology"/>
<accession>Q31IY1</accession>
<reference key="1">
    <citation type="journal article" date="2006" name="PLoS Biol.">
        <title>The genome of deep-sea vent chemolithoautotroph Thiomicrospira crunogena XCL-2.</title>
        <authorList>
            <person name="Scott K.M."/>
            <person name="Sievert S.M."/>
            <person name="Abril F.N."/>
            <person name="Ball L.A."/>
            <person name="Barrett C.J."/>
            <person name="Blake R.A."/>
            <person name="Boller A.J."/>
            <person name="Chain P.S.G."/>
            <person name="Clark J.A."/>
            <person name="Davis C.R."/>
            <person name="Detter C."/>
            <person name="Do K.F."/>
            <person name="Dobrinski K.P."/>
            <person name="Faza B.I."/>
            <person name="Fitzpatrick K.A."/>
            <person name="Freyermuth S.K."/>
            <person name="Harmer T.L."/>
            <person name="Hauser L.J."/>
            <person name="Huegler M."/>
            <person name="Kerfeld C.A."/>
            <person name="Klotz M.G."/>
            <person name="Kong W.W."/>
            <person name="Land M."/>
            <person name="Lapidus A."/>
            <person name="Larimer F.W."/>
            <person name="Longo D.L."/>
            <person name="Lucas S."/>
            <person name="Malfatti S.A."/>
            <person name="Massey S.E."/>
            <person name="Martin D.D."/>
            <person name="McCuddin Z."/>
            <person name="Meyer F."/>
            <person name="Moore J.L."/>
            <person name="Ocampo L.H. Jr."/>
            <person name="Paul J.H."/>
            <person name="Paulsen I.T."/>
            <person name="Reep D.K."/>
            <person name="Ren Q."/>
            <person name="Ross R.L."/>
            <person name="Sato P.Y."/>
            <person name="Thomas P."/>
            <person name="Tinkham L.E."/>
            <person name="Zeruth G.T."/>
        </authorList>
    </citation>
    <scope>NUCLEOTIDE SEQUENCE [LARGE SCALE GENOMIC DNA]</scope>
    <source>
        <strain>DSM 25203 / XCL-2</strain>
    </source>
</reference>
<sequence>MDLKLIELASGKEAGSVKVSEAIFGAEFNEALVHQVVNAYLAGARSGTKGQKNRSAVRGGGAKPWAQKGSGRARAGTSRGPIWIGGGRAFPGHNRDFSQKVNKKMYRGAMKAIFSELARTERLVVVDDFKVEAPKTKDFVAKLNTLNLKDALVITEGFDEYLYLSARNLYHADVCDVASIDPVSLVGFKSIVVTQGAIKQLEEKLA</sequence>
<comment type="function">
    <text evidence="1">One of the primary rRNA binding proteins, this protein initially binds near the 5'-end of the 23S rRNA. It is important during the early stages of 50S assembly. It makes multiple contacts with different domains of the 23S rRNA in the assembled 50S subunit and ribosome.</text>
</comment>
<comment type="function">
    <text evidence="1">Forms part of the polypeptide exit tunnel.</text>
</comment>
<comment type="subunit">
    <text evidence="1">Part of the 50S ribosomal subunit.</text>
</comment>
<comment type="similarity">
    <text evidence="1">Belongs to the universal ribosomal protein uL4 family.</text>
</comment>
<gene>
    <name evidence="1" type="primary">rplD</name>
    <name type="ordered locus">Tcr_0296</name>
</gene>